<sequence length="211" mass="23003">MSEGGSKDSSGSECPVCYEKFRDLDGASRTLSCGHVFCHDCLVKYLLSTRVDGQVQRTIVCPICRYVTFLSKKSSRWPSMLDKSSQTLTVPVGLPSTPSPDRGGHTNPLVISHQVWRQSSSQGSQVPLDLLPSLPRESQIFIISRHGMPLGEQDSVLPRRSLAEISEASPAPSATRSFCCRSRALLLITLIAVVAVVAAILPWVLLVRKQA</sequence>
<reference key="1">
    <citation type="journal article" date="2005" name="Science">
        <title>The transcriptional landscape of the mammalian genome.</title>
        <authorList>
            <person name="Carninci P."/>
            <person name="Kasukawa T."/>
            <person name="Katayama S."/>
            <person name="Gough J."/>
            <person name="Frith M.C."/>
            <person name="Maeda N."/>
            <person name="Oyama R."/>
            <person name="Ravasi T."/>
            <person name="Lenhard B."/>
            <person name="Wells C."/>
            <person name="Kodzius R."/>
            <person name="Shimokawa K."/>
            <person name="Bajic V.B."/>
            <person name="Brenner S.E."/>
            <person name="Batalov S."/>
            <person name="Forrest A.R."/>
            <person name="Zavolan M."/>
            <person name="Davis M.J."/>
            <person name="Wilming L.G."/>
            <person name="Aidinis V."/>
            <person name="Allen J.E."/>
            <person name="Ambesi-Impiombato A."/>
            <person name="Apweiler R."/>
            <person name="Aturaliya R.N."/>
            <person name="Bailey T.L."/>
            <person name="Bansal M."/>
            <person name="Baxter L."/>
            <person name="Beisel K.W."/>
            <person name="Bersano T."/>
            <person name="Bono H."/>
            <person name="Chalk A.M."/>
            <person name="Chiu K.P."/>
            <person name="Choudhary V."/>
            <person name="Christoffels A."/>
            <person name="Clutterbuck D.R."/>
            <person name="Crowe M.L."/>
            <person name="Dalla E."/>
            <person name="Dalrymple B.P."/>
            <person name="de Bono B."/>
            <person name="Della Gatta G."/>
            <person name="di Bernardo D."/>
            <person name="Down T."/>
            <person name="Engstrom P."/>
            <person name="Fagiolini M."/>
            <person name="Faulkner G."/>
            <person name="Fletcher C.F."/>
            <person name="Fukushima T."/>
            <person name="Furuno M."/>
            <person name="Futaki S."/>
            <person name="Gariboldi M."/>
            <person name="Georgii-Hemming P."/>
            <person name="Gingeras T.R."/>
            <person name="Gojobori T."/>
            <person name="Green R.E."/>
            <person name="Gustincich S."/>
            <person name="Harbers M."/>
            <person name="Hayashi Y."/>
            <person name="Hensch T.K."/>
            <person name="Hirokawa N."/>
            <person name="Hill D."/>
            <person name="Huminiecki L."/>
            <person name="Iacono M."/>
            <person name="Ikeo K."/>
            <person name="Iwama A."/>
            <person name="Ishikawa T."/>
            <person name="Jakt M."/>
            <person name="Kanapin A."/>
            <person name="Katoh M."/>
            <person name="Kawasawa Y."/>
            <person name="Kelso J."/>
            <person name="Kitamura H."/>
            <person name="Kitano H."/>
            <person name="Kollias G."/>
            <person name="Krishnan S.P."/>
            <person name="Kruger A."/>
            <person name="Kummerfeld S.K."/>
            <person name="Kurochkin I.V."/>
            <person name="Lareau L.F."/>
            <person name="Lazarevic D."/>
            <person name="Lipovich L."/>
            <person name="Liu J."/>
            <person name="Liuni S."/>
            <person name="McWilliam S."/>
            <person name="Madan Babu M."/>
            <person name="Madera M."/>
            <person name="Marchionni L."/>
            <person name="Matsuda H."/>
            <person name="Matsuzawa S."/>
            <person name="Miki H."/>
            <person name="Mignone F."/>
            <person name="Miyake S."/>
            <person name="Morris K."/>
            <person name="Mottagui-Tabar S."/>
            <person name="Mulder N."/>
            <person name="Nakano N."/>
            <person name="Nakauchi H."/>
            <person name="Ng P."/>
            <person name="Nilsson R."/>
            <person name="Nishiguchi S."/>
            <person name="Nishikawa S."/>
            <person name="Nori F."/>
            <person name="Ohara O."/>
            <person name="Okazaki Y."/>
            <person name="Orlando V."/>
            <person name="Pang K.C."/>
            <person name="Pavan W.J."/>
            <person name="Pavesi G."/>
            <person name="Pesole G."/>
            <person name="Petrovsky N."/>
            <person name="Piazza S."/>
            <person name="Reed J."/>
            <person name="Reid J.F."/>
            <person name="Ring B.Z."/>
            <person name="Ringwald M."/>
            <person name="Rost B."/>
            <person name="Ruan Y."/>
            <person name="Salzberg S.L."/>
            <person name="Sandelin A."/>
            <person name="Schneider C."/>
            <person name="Schoenbach C."/>
            <person name="Sekiguchi K."/>
            <person name="Semple C.A."/>
            <person name="Seno S."/>
            <person name="Sessa L."/>
            <person name="Sheng Y."/>
            <person name="Shibata Y."/>
            <person name="Shimada H."/>
            <person name="Shimada K."/>
            <person name="Silva D."/>
            <person name="Sinclair B."/>
            <person name="Sperling S."/>
            <person name="Stupka E."/>
            <person name="Sugiura K."/>
            <person name="Sultana R."/>
            <person name="Takenaka Y."/>
            <person name="Taki K."/>
            <person name="Tammoja K."/>
            <person name="Tan S.L."/>
            <person name="Tang S."/>
            <person name="Taylor M.S."/>
            <person name="Tegner J."/>
            <person name="Teichmann S.A."/>
            <person name="Ueda H.R."/>
            <person name="van Nimwegen E."/>
            <person name="Verardo R."/>
            <person name="Wei C.L."/>
            <person name="Yagi K."/>
            <person name="Yamanishi H."/>
            <person name="Zabarovsky E."/>
            <person name="Zhu S."/>
            <person name="Zimmer A."/>
            <person name="Hide W."/>
            <person name="Bult C."/>
            <person name="Grimmond S.M."/>
            <person name="Teasdale R.D."/>
            <person name="Liu E.T."/>
            <person name="Brusic V."/>
            <person name="Quackenbush J."/>
            <person name="Wahlestedt C."/>
            <person name="Mattick J.S."/>
            <person name="Hume D.A."/>
            <person name="Kai C."/>
            <person name="Sasaki D."/>
            <person name="Tomaru Y."/>
            <person name="Fukuda S."/>
            <person name="Kanamori-Katayama M."/>
            <person name="Suzuki M."/>
            <person name="Aoki J."/>
            <person name="Arakawa T."/>
            <person name="Iida J."/>
            <person name="Imamura K."/>
            <person name="Itoh M."/>
            <person name="Kato T."/>
            <person name="Kawaji H."/>
            <person name="Kawagashira N."/>
            <person name="Kawashima T."/>
            <person name="Kojima M."/>
            <person name="Kondo S."/>
            <person name="Konno H."/>
            <person name="Nakano K."/>
            <person name="Ninomiya N."/>
            <person name="Nishio T."/>
            <person name="Okada M."/>
            <person name="Plessy C."/>
            <person name="Shibata K."/>
            <person name="Shiraki T."/>
            <person name="Suzuki S."/>
            <person name="Tagami M."/>
            <person name="Waki K."/>
            <person name="Watahiki A."/>
            <person name="Okamura-Oho Y."/>
            <person name="Suzuki H."/>
            <person name="Kawai J."/>
            <person name="Hayashizaki Y."/>
        </authorList>
    </citation>
    <scope>NUCLEOTIDE SEQUENCE [LARGE SCALE MRNA]</scope>
    <source>
        <strain>C57BL/6J</strain>
        <tissue>Head</tissue>
    </source>
</reference>
<reference key="2">
    <citation type="journal article" date="2009" name="PLoS Biol.">
        <title>Lineage-specific biology revealed by a finished genome assembly of the mouse.</title>
        <authorList>
            <person name="Church D.M."/>
            <person name="Goodstadt L."/>
            <person name="Hillier L.W."/>
            <person name="Zody M.C."/>
            <person name="Goldstein S."/>
            <person name="She X."/>
            <person name="Bult C.J."/>
            <person name="Agarwala R."/>
            <person name="Cherry J.L."/>
            <person name="DiCuccio M."/>
            <person name="Hlavina W."/>
            <person name="Kapustin Y."/>
            <person name="Meric P."/>
            <person name="Maglott D."/>
            <person name="Birtle Z."/>
            <person name="Marques A.C."/>
            <person name="Graves T."/>
            <person name="Zhou S."/>
            <person name="Teague B."/>
            <person name="Potamousis K."/>
            <person name="Churas C."/>
            <person name="Place M."/>
            <person name="Herschleb J."/>
            <person name="Runnheim R."/>
            <person name="Forrest D."/>
            <person name="Amos-Landgraf J."/>
            <person name="Schwartz D.C."/>
            <person name="Cheng Z."/>
            <person name="Lindblad-Toh K."/>
            <person name="Eichler E.E."/>
            <person name="Ponting C.P."/>
        </authorList>
    </citation>
    <scope>NUCLEOTIDE SEQUENCE [LARGE SCALE GENOMIC DNA]</scope>
    <source>
        <strain>C57BL/6J</strain>
    </source>
</reference>
<gene>
    <name type="primary">Rnf222</name>
</gene>
<proteinExistence type="evidence at transcript level"/>
<evidence type="ECO:0000255" key="1"/>
<evidence type="ECO:0000255" key="2">
    <source>
        <dbReference type="PROSITE-ProRule" id="PRU00175"/>
    </source>
</evidence>
<evidence type="ECO:0000305" key="3"/>
<organism>
    <name type="scientific">Mus musculus</name>
    <name type="common">Mouse</name>
    <dbReference type="NCBI Taxonomy" id="10090"/>
    <lineage>
        <taxon>Eukaryota</taxon>
        <taxon>Metazoa</taxon>
        <taxon>Chordata</taxon>
        <taxon>Craniata</taxon>
        <taxon>Vertebrata</taxon>
        <taxon>Euteleostomi</taxon>
        <taxon>Mammalia</taxon>
        <taxon>Eutheria</taxon>
        <taxon>Euarchontoglires</taxon>
        <taxon>Glires</taxon>
        <taxon>Rodentia</taxon>
        <taxon>Myomorpha</taxon>
        <taxon>Muroidea</taxon>
        <taxon>Muridae</taxon>
        <taxon>Murinae</taxon>
        <taxon>Mus</taxon>
        <taxon>Mus</taxon>
    </lineage>
</organism>
<dbReference type="EMBL" id="AK028294">
    <property type="protein sequence ID" value="BAC25864.1"/>
    <property type="molecule type" value="mRNA"/>
</dbReference>
<dbReference type="EMBL" id="AL603662">
    <property type="status" value="NOT_ANNOTATED_CDS"/>
    <property type="molecule type" value="Genomic_DNA"/>
</dbReference>
<dbReference type="CCDS" id="CCDS24871.1"/>
<dbReference type="RefSeq" id="NP_796034.2">
    <property type="nucleotide sequence ID" value="NM_177060.3"/>
</dbReference>
<dbReference type="RefSeq" id="XP_006533603.1">
    <property type="nucleotide sequence ID" value="XM_006533540.3"/>
</dbReference>
<dbReference type="RefSeq" id="XP_006533605.1">
    <property type="nucleotide sequence ID" value="XM_006533542.4"/>
</dbReference>
<dbReference type="RefSeq" id="XP_006533606.1">
    <property type="nucleotide sequence ID" value="XM_006533543.3"/>
</dbReference>
<dbReference type="RefSeq" id="XP_017170097.1">
    <property type="nucleotide sequence ID" value="XM_017314608.1"/>
</dbReference>
<dbReference type="BioGRID" id="235719">
    <property type="interactions" value="1"/>
</dbReference>
<dbReference type="FunCoup" id="Q8CEF8">
    <property type="interactions" value="3"/>
</dbReference>
<dbReference type="STRING" id="10090.ENSMUSP00000067364"/>
<dbReference type="GlyGen" id="Q8CEF8">
    <property type="glycosylation" value="1 site"/>
</dbReference>
<dbReference type="PhosphoSitePlus" id="Q8CEF8"/>
<dbReference type="PaxDb" id="10090-ENSMUSP00000067364"/>
<dbReference type="ProteomicsDB" id="300425"/>
<dbReference type="Antibodypedia" id="62437">
    <property type="antibodies" value="6 antibodies from 6 providers"/>
</dbReference>
<dbReference type="DNASU" id="320040"/>
<dbReference type="Ensembl" id="ENSMUST00000065213.5">
    <property type="protein sequence ID" value="ENSMUSP00000067364.5"/>
    <property type="gene ID" value="ENSMUSG00000046490.8"/>
</dbReference>
<dbReference type="GeneID" id="320040"/>
<dbReference type="KEGG" id="mmu:320040"/>
<dbReference type="UCSC" id="uc007jog.1">
    <property type="organism name" value="mouse"/>
</dbReference>
<dbReference type="AGR" id="MGI:2443227"/>
<dbReference type="CTD" id="643904"/>
<dbReference type="MGI" id="MGI:2443227">
    <property type="gene designation" value="Rnf222"/>
</dbReference>
<dbReference type="VEuPathDB" id="HostDB:ENSMUSG00000046490"/>
<dbReference type="eggNOG" id="ENOG502S4BM">
    <property type="taxonomic scope" value="Eukaryota"/>
</dbReference>
<dbReference type="GeneTree" id="ENSGT00390000002856"/>
<dbReference type="HOGENOM" id="CLU_1242627_0_0_1"/>
<dbReference type="InParanoid" id="Q8CEF8"/>
<dbReference type="OMA" id="TRSFCCR"/>
<dbReference type="OrthoDB" id="6270329at2759"/>
<dbReference type="PhylomeDB" id="Q8CEF8"/>
<dbReference type="TreeFam" id="TF333220"/>
<dbReference type="BioGRID-ORCS" id="320040">
    <property type="hits" value="3 hits in 77 CRISPR screens"/>
</dbReference>
<dbReference type="ChiTaRS" id="Rnf222">
    <property type="organism name" value="mouse"/>
</dbReference>
<dbReference type="PRO" id="PR:Q8CEF8"/>
<dbReference type="Proteomes" id="UP000000589">
    <property type="component" value="Chromosome 11"/>
</dbReference>
<dbReference type="RNAct" id="Q8CEF8">
    <property type="molecule type" value="protein"/>
</dbReference>
<dbReference type="Bgee" id="ENSMUSG00000046490">
    <property type="expression patterns" value="Expressed in lip and 15 other cell types or tissues"/>
</dbReference>
<dbReference type="GO" id="GO:0016020">
    <property type="term" value="C:membrane"/>
    <property type="evidence" value="ECO:0007669"/>
    <property type="project" value="UniProtKB-SubCell"/>
</dbReference>
<dbReference type="GO" id="GO:0008270">
    <property type="term" value="F:zinc ion binding"/>
    <property type="evidence" value="ECO:0007669"/>
    <property type="project" value="UniProtKB-KW"/>
</dbReference>
<dbReference type="CDD" id="cd16564">
    <property type="entry name" value="RING-HC_RNF222"/>
    <property type="match status" value="1"/>
</dbReference>
<dbReference type="Gene3D" id="3.30.40.10">
    <property type="entry name" value="Zinc/RING finger domain, C3HC4 (zinc finger)"/>
    <property type="match status" value="1"/>
</dbReference>
<dbReference type="InterPro" id="IPR042973">
    <property type="entry name" value="RNF222"/>
</dbReference>
<dbReference type="InterPro" id="IPR027370">
    <property type="entry name" value="Znf-RING_euk"/>
</dbReference>
<dbReference type="InterPro" id="IPR001841">
    <property type="entry name" value="Znf_RING"/>
</dbReference>
<dbReference type="InterPro" id="IPR013083">
    <property type="entry name" value="Znf_RING/FYVE/PHD"/>
</dbReference>
<dbReference type="InterPro" id="IPR017907">
    <property type="entry name" value="Znf_RING_CS"/>
</dbReference>
<dbReference type="PANTHER" id="PTHR47095">
    <property type="entry name" value="RING FINGER PROTEIN 222"/>
    <property type="match status" value="1"/>
</dbReference>
<dbReference type="PANTHER" id="PTHR47095:SF1">
    <property type="entry name" value="RING FINGER PROTEIN 222"/>
    <property type="match status" value="1"/>
</dbReference>
<dbReference type="Pfam" id="PF13445">
    <property type="entry name" value="zf-RING_UBOX"/>
    <property type="match status" value="1"/>
</dbReference>
<dbReference type="SMART" id="SM00184">
    <property type="entry name" value="RING"/>
    <property type="match status" value="1"/>
</dbReference>
<dbReference type="SUPFAM" id="SSF57850">
    <property type="entry name" value="RING/U-box"/>
    <property type="match status" value="1"/>
</dbReference>
<dbReference type="PROSITE" id="PS00518">
    <property type="entry name" value="ZF_RING_1"/>
    <property type="match status" value="1"/>
</dbReference>
<dbReference type="PROSITE" id="PS50089">
    <property type="entry name" value="ZF_RING_2"/>
    <property type="match status" value="1"/>
</dbReference>
<feature type="chain" id="PRO_0000329086" description="RING finger protein 222">
    <location>
        <begin position="1"/>
        <end position="211"/>
    </location>
</feature>
<feature type="transmembrane region" description="Helical" evidence="1">
    <location>
        <begin position="187"/>
        <end position="207"/>
    </location>
</feature>
<feature type="zinc finger region" description="RING-type" evidence="2">
    <location>
        <begin position="14"/>
        <end position="65"/>
    </location>
</feature>
<feature type="sequence conflict" description="In Ref. 1; BAC25864." evidence="3" ref="1">
    <original>V</original>
    <variation>M</variation>
    <location>
        <position position="16"/>
    </location>
</feature>
<protein>
    <recommendedName>
        <fullName>RING finger protein 222</fullName>
    </recommendedName>
</protein>
<name>RN222_MOUSE</name>
<keyword id="KW-0472">Membrane</keyword>
<keyword id="KW-0479">Metal-binding</keyword>
<keyword id="KW-1185">Reference proteome</keyword>
<keyword id="KW-0812">Transmembrane</keyword>
<keyword id="KW-1133">Transmembrane helix</keyword>
<keyword id="KW-0862">Zinc</keyword>
<keyword id="KW-0863">Zinc-finger</keyword>
<accession>Q8CEF8</accession>
<accession>B1ARA2</accession>
<comment type="subcellular location">
    <subcellularLocation>
        <location evidence="3">Membrane</location>
        <topology evidence="3">Single-pass membrane protein</topology>
    </subcellularLocation>
</comment>